<comment type="function">
    <text evidence="24 25 26">Seed storage protein.</text>
</comment>
<comment type="biophysicochemical properties">
    <temperatureDependence>
        <text evidence="4">Resistant to heat. Retains its alpha-helical fold after heating at 90 degrees Celsius and subsequent cooling to 20 degrees Celsius.</text>
    </temperatureDependence>
</comment>
<comment type="subunit">
    <text evidence="4 7 12">The mature protein consists of a small chain and a large chain linked by disulfide bonds.</text>
</comment>
<comment type="tissue specificity">
    <text evidence="4 7 11">Expressed in seed (at protein level) (PubMed:19540419, PubMed:25388987, PubMed:32283362). Expressed in the peel of mature seed (PubMed:19540419).</text>
</comment>
<comment type="developmental stage">
    <text evidence="4">Expressed during seed maturation.</text>
</comment>
<comment type="mass spectrometry">
    <text>The measured mass is that of an intact non-reduced protein.</text>
</comment>
<comment type="mass spectrometry">
    <molecule>2S albumin seed storage protein small subunit</molecule>
</comment>
<comment type="mass spectrometry">
    <molecule>2S albumin seed storage protein large subunit</molecule>
</comment>
<comment type="mass spectrometry">
    <molecule>2S albumin seed storage protein small subunit</molecule>
</comment>
<comment type="mass spectrometry">
    <molecule>2S albumin seed storage protein large subunit</molecule>
</comment>
<comment type="allergen">
    <text evidence="3 4 5 7 8 9 10 11 12">Causes an allergic reaction in human. Binds to IgE of patients allergic to walnuts (PubMed:11799381, PubMed:19540419, PubMed:22042002, PubMed:25388987, PubMed:27597723, PubMed:28552380, PubMed:31175720, PubMed:32283362, PubMed:9648708). Binds to IgE of patients allergic to peanuts (PubMed:22042002). Binds to IgE in 97% of the 32 Korean babies and children tested allergic to walnuts (PubMed:31175720). Native protein binds to IgE in 100% of the 6 Chinese walnut-allergic patients tested (PubMed:32283362). Native protein binds to IgE in 45% of the 11 walnut-allergic patients tested living in Spain or England (PubMed:25388987). Recombinant protein binds to IgE in 75% of the 16 walnut-allergic patients tested (PubMed:9648708). Recombinant protein binds to IgE in 100% of the 20 walnut-allergic patients tested (PubMed:11799381). Recombinant protein binds to IgE in 55% and 61% of the 33 walnut-allergic adult patients living in Netherlands tested by ImmunoCAP and ImmunoCAP ISAC, respectively (PubMed:27597723). Contains linear and conformational IgE-binding epitopes (PubMed:11799381). Cross-reacts with sesame seed allergens Ses i 1 and Ses i 2. IgE-binding is lost in the presence of pepsin after 1 hour incubation at pH 1.5 and 37 degrees Celsius in vitro, but it is not affected in the presence of trypsin and chymotrypsin after 2 hour incubation in vitro at pH 8 and 37 degrees Celsius. Induces in vitro degranulation of the humanized rat basophilic leukemia (RBL) cells and release of beta-hexosaminidase from them (PubMed:19540419).</text>
</comment>
<comment type="biotechnology">
    <text evidence="4 6 9 10 11">The recombinant protein could be used for a reliable component-resolved diagnosis of walnut allergy as it has the same properties and virtually identical IgE-binding reactivity as the native protein even that it is unprocessed and hence lacking the proteolytic cleavages of the mature protein (PubMed:19540419). A rapid, highly specific and relatively sensitive indirect competitive enzyme-linked immunosorbent assay (ELISA) for detection and quantification of walnut protein component in processed foods has been developed using polyclonal antibodies against this protein (PubMed:24206692). Testing young patients specific IgE-reactivity of this protein is a better approach in diagnosing clinical walnut allergy in children and youth compared to the walnut extract-based testing due to its improved specificity as shown by the receiver operating characteristic (ROC) statistical analysis (PubMed:28552380, PubMed:31175720). The strategy of synthesizing digestion-resistant peptides instead of overlapping peptides, and verifying them using sera from walnut-allergic patients, can significantly reduce workload and serum requirement, enhance pertinence, and improve efficiency in studying linear epitopes of this protein (PubMed:32283362).</text>
</comment>
<comment type="similarity">
    <text evidence="22">Belongs to the 2S seed storage albumins family.</text>
</comment>
<organism evidence="27">
    <name type="scientific">Juglans regia</name>
    <name type="common">English walnut</name>
    <dbReference type="NCBI Taxonomy" id="51240"/>
    <lineage>
        <taxon>Eukaryota</taxon>
        <taxon>Viridiplantae</taxon>
        <taxon>Streptophyta</taxon>
        <taxon>Embryophyta</taxon>
        <taxon>Tracheophyta</taxon>
        <taxon>Spermatophyta</taxon>
        <taxon>Magnoliopsida</taxon>
        <taxon>eudicotyledons</taxon>
        <taxon>Gunneridae</taxon>
        <taxon>Pentapetalae</taxon>
        <taxon>rosids</taxon>
        <taxon>fabids</taxon>
        <taxon>Fagales</taxon>
        <taxon>Juglandaceae</taxon>
        <taxon>Juglans</taxon>
    </lineage>
</organism>
<feature type="signal peptide" evidence="2">
    <location>
        <begin position="1" status="less than"/>
        <end position="15"/>
    </location>
</feature>
<feature type="propeptide" id="PRO_0000451111" evidence="2 23">
    <location>
        <begin position="16"/>
        <end position="31"/>
    </location>
</feature>
<feature type="chain" id="PRO_0000451112" description="2S albumin seed storage protein small subunit" evidence="23">
    <location>
        <begin position="32"/>
        <end position="57"/>
    </location>
</feature>
<feature type="propeptide" id="PRO_0000451113" evidence="23">
    <location>
        <begin position="58"/>
        <end position="71"/>
    </location>
</feature>
<feature type="chain" id="PRO_0000451114" description="2S albumin seed storage protein large subunit" evidence="23">
    <location>
        <begin position="72"/>
        <end position="135"/>
    </location>
</feature>
<feature type="propeptide" id="PRO_0000451115" evidence="23">
    <location>
        <begin position="136"/>
        <end position="139"/>
    </location>
</feature>
<feature type="region of interest" description="IgE-binding" evidence="11">
    <location>
        <begin position="16"/>
        <end position="30"/>
    </location>
</feature>
<feature type="region of interest" description="IgE-binding" evidence="4">
    <location>
        <begin position="29"/>
        <end position="34"/>
    </location>
</feature>
<feature type="region of interest" description="IgE-binding" evidence="5">
    <location>
        <begin position="64"/>
        <end position="78"/>
    </location>
</feature>
<feature type="region of interest" description="IgE-binding" evidence="4">
    <location>
        <begin position="65"/>
        <end position="73"/>
    </location>
</feature>
<feature type="region of interest" description="IgE-binding" evidence="4">
    <location>
        <begin position="95"/>
        <end position="103"/>
    </location>
</feature>
<feature type="region of interest" description="IgE-binding" evidence="3">
    <location>
        <begin position="99"/>
        <end position="111"/>
    </location>
</feature>
<feature type="region of interest" description="IgE-binding" evidence="3">
    <location>
        <begin position="102"/>
        <end position="114"/>
    </location>
</feature>
<feature type="region of interest" description="Immunodominant epitope. IgE-binding; binds to IgE in 75% of the 20 walnut-allergic patients tested" evidence="3">
    <location>
        <begin position="104"/>
        <end position="115"/>
    </location>
</feature>
<feature type="region of interest" description="IgE-binding" evidence="3">
    <location>
        <begin position="105"/>
        <end position="117"/>
    </location>
</feature>
<feature type="region of interest" description="Minimally required for IgE-binding by the immunodominant epitope" evidence="3">
    <location>
        <begin position="107"/>
        <end position="110"/>
    </location>
</feature>
<feature type="region of interest" description="IgE-binding" evidence="5">
    <location>
        <begin position="112"/>
        <end position="126"/>
    </location>
</feature>
<feature type="region of interest" description="IgE-binding" evidence="11">
    <location>
        <begin position="125"/>
        <end position="139"/>
    </location>
</feature>
<feature type="region of interest" description="IgE-binding" evidence="4">
    <location>
        <begin position="125"/>
        <end position="136"/>
    </location>
</feature>
<feature type="site" description="Necessary for maximum IgE-binding by the immunodominant epitope" evidence="3">
    <location>
        <position position="113"/>
    </location>
</feature>
<feature type="disulfide bond" description="Interchain (between small and large chains)" evidence="1">
    <location>
        <begin position="39"/>
        <end position="88"/>
    </location>
</feature>
<feature type="disulfide bond" description="Interchain (between small and large chains)" evidence="1">
    <location>
        <begin position="52"/>
        <end position="77"/>
    </location>
</feature>
<feature type="disulfide bond" evidence="1">
    <location>
        <begin position="78"/>
        <end position="125"/>
    </location>
</feature>
<feature type="disulfide bond" evidence="1">
    <location>
        <begin position="90"/>
        <end position="132"/>
    </location>
</feature>
<feature type="mutagenesis site" description="IgE-binding is retained by the immunodominant epitope." evidence="3">
    <original>Q</original>
    <variation>A</variation>
    <location>
        <position position="104"/>
    </location>
</feature>
<feature type="mutagenesis site" description="IgE-binding is retained by the immunodominant epitope." evidence="3">
    <original>G</original>
    <variation>A</variation>
    <location>
        <position position="105"/>
    </location>
</feature>
<feature type="mutagenesis site" description="IgE-binding is retained by the immunodominant epitope." evidence="3">
    <original>L</original>
    <variation>A</variation>
    <location>
        <position position="106"/>
    </location>
</feature>
<feature type="mutagenesis site" description="Loss of IgE-binding by the immunodominant epitope." evidence="3">
    <original>R</original>
    <variation>A</variation>
    <location>
        <position position="107"/>
    </location>
</feature>
<feature type="mutagenesis site" description="Loss of IgE-binding by the immunodominant epitope." evidence="3">
    <original>G</original>
    <variation>A</variation>
    <location>
        <position position="108"/>
    </location>
</feature>
<feature type="mutagenesis site" description="Loss of IgE-binding by the immunodominant epitope." evidence="3">
    <original>E</original>
    <variation>A</variation>
    <location>
        <position position="109"/>
    </location>
</feature>
<feature type="mutagenesis site" description="Loss of IgE-binding by the immunodominant epitope." evidence="3">
    <original>E</original>
    <variation>A</variation>
    <location>
        <position position="110"/>
    </location>
</feature>
<feature type="mutagenesis site" description="IgE-binding is retained by the immunodominant epitope." evidence="3">
    <original>M</original>
    <variation>A</variation>
    <location>
        <position position="111"/>
    </location>
</feature>
<feature type="mutagenesis site" description="IgE-binding is retained by the immunodominant epitope." evidence="3">
    <original>E</original>
    <variation>A</variation>
    <location>
        <position position="112"/>
    </location>
</feature>
<feature type="mutagenesis site" description="IgE-binding is retained by the immunodominant epitope." evidence="3">
    <original>E</original>
    <variation>A</variation>
    <location>
        <position position="113"/>
    </location>
</feature>
<feature type="mutagenesis site" description="IgE-binding is retained by the immunodominant epitope." evidence="3">
    <original>M</original>
    <variation>A</variation>
    <location>
        <position position="114"/>
    </location>
</feature>
<feature type="mutagenesis site" description="IgE-binding is retained by the immunodominant epitope." evidence="3">
    <original>V</original>
    <variation>A</variation>
    <location>
        <position position="115"/>
    </location>
</feature>
<feature type="non-terminal residue" evidence="27">
    <location>
        <position position="1"/>
    </location>
</feature>
<proteinExistence type="evidence at protein level"/>
<keyword id="KW-0020">Allergen</keyword>
<keyword id="KW-0903">Direct protein sequencing</keyword>
<keyword id="KW-1015">Disulfide bond</keyword>
<keyword id="KW-1185">Reference proteome</keyword>
<keyword id="KW-0708">Seed storage protein</keyword>
<keyword id="KW-0732">Signal</keyword>
<keyword id="KW-0758">Storage protein</keyword>
<evidence type="ECO:0000250" key="1">
    <source>
        <dbReference type="UniProtKB" id="P04403"/>
    </source>
</evidence>
<evidence type="ECO:0000255" key="2"/>
<evidence type="ECO:0000269" key="3">
    <source>
    </source>
</evidence>
<evidence type="ECO:0000269" key="4">
    <source>
    </source>
</evidence>
<evidence type="ECO:0000269" key="5">
    <source>
    </source>
</evidence>
<evidence type="ECO:0000269" key="6">
    <source>
    </source>
</evidence>
<evidence type="ECO:0000269" key="7">
    <source>
    </source>
</evidence>
<evidence type="ECO:0000269" key="8">
    <source>
    </source>
</evidence>
<evidence type="ECO:0000269" key="9">
    <source>
    </source>
</evidence>
<evidence type="ECO:0000269" key="10">
    <source>
    </source>
</evidence>
<evidence type="ECO:0000269" key="11">
    <source>
    </source>
</evidence>
<evidence type="ECO:0000269" key="12">
    <source>
    </source>
</evidence>
<evidence type="ECO:0000303" key="13">
    <source>
    </source>
</evidence>
<evidence type="ECO:0000303" key="14">
    <source>
    </source>
</evidence>
<evidence type="ECO:0000303" key="15">
    <source>
    </source>
</evidence>
<evidence type="ECO:0000303" key="16">
    <source>
    </source>
</evidence>
<evidence type="ECO:0000303" key="17">
    <source>
    </source>
</evidence>
<evidence type="ECO:0000303" key="18">
    <source>
    </source>
</evidence>
<evidence type="ECO:0000303" key="19">
    <source>
    </source>
</evidence>
<evidence type="ECO:0000303" key="20">
    <source>
    </source>
</evidence>
<evidence type="ECO:0000303" key="21">
    <source>
    </source>
</evidence>
<evidence type="ECO:0000305" key="22"/>
<evidence type="ECO:0000305" key="23">
    <source>
    </source>
</evidence>
<evidence type="ECO:0000305" key="24">
    <source>
    </source>
</evidence>
<evidence type="ECO:0000305" key="25">
    <source>
    </source>
</evidence>
<evidence type="ECO:0000305" key="26">
    <source>
    </source>
</evidence>
<evidence type="ECO:0000312" key="27">
    <source>
        <dbReference type="EMBL" id="AAB41308.1"/>
    </source>
</evidence>
<accession>P93198</accession>
<sequence>AALLVALLFVANAAAFRTTITTMEIDEDIDNPRRRGEGCREQIQRQQNLNHCQYYLRQQSRSGGYDEDNQRQHFRQCCQQLSQMDEQCQCEGLRQVVRRQQQQQGLRGEEMEEMVQSARDLPNECGISSQRCEIRRSWF</sequence>
<reference evidence="27" key="1">
    <citation type="journal article" date="1998" name="J. Allergy Clin. Immunol.">
        <title>Cloning and sequencing of a gene encoding a 2S albumin seed storage protein precursor from English walnut (Juglans regia), a major food allergen.</title>
        <authorList>
            <person name="Teuber S.S."/>
            <person name="Dandekar A.M."/>
            <person name="Peterson W.R."/>
            <person name="Sellers C.L."/>
        </authorList>
    </citation>
    <scope>NUCLEOTIDE SEQUENCE [MRNA]</scope>
    <scope>SUBUNIT</scope>
    <scope>ALLERGEN</scope>
    <source>
        <strain evidence="21 27">cv. Sunland</strain>
        <tissue evidence="21">Somatic embryo</tissue>
    </source>
</reference>
<reference key="2">
    <citation type="journal article" date="2020" name="Food Chem.">
        <title>Sequence analysis of digestion-resistant peptides may be an efficient strategy for studying the linear epitopes of Jug r 1, the major walnut allergen.</title>
        <authorList>
            <person name="Guo X."/>
            <person name="Jiang S."/>
            <person name="Li X."/>
            <person name="Yang S."/>
            <person name="Cheng L."/>
            <person name="Qiu J."/>
            <person name="Che H."/>
        </authorList>
    </citation>
    <scope>PROTEIN SEQUENCE OF 19-33; 22-33; 23-33; 24-33; 25-33; 26-33; 27-33; 28-33; 40-45; 54-65; 56-74; 57-74; 59-74; 65-74; 96-106 AND 117-137</scope>
    <scope>TISSUE SPECIFICITY</scope>
    <scope>IDENTIFICATION BY MASS SPECTROMETRY</scope>
    <scope>ALLERGEN</scope>
    <scope>BIOTECHNOLOGY</scope>
    <scope>REGIONS</scope>
    <scope>3D-STRUCTURE MODELING</scope>
    <source>
        <tissue evidence="11">Seed</tissue>
    </source>
</reference>
<reference key="3">
    <citation type="journal article" date="2014" name="J. Agric. Food Chem.">
        <title>Characterization of low molecular weight allergens from English walnut (Juglans regia).</title>
        <authorList>
            <person name="Downs M.L."/>
            <person name="Semic-Jusufagic A."/>
            <person name="Simpson A."/>
            <person name="Bartra J."/>
            <person name="Fernandez-Rivas M."/>
            <person name="Rigby N.M."/>
            <person name="Taylor S.L."/>
            <person name="Baumert J.L."/>
            <person name="Mills E.N."/>
        </authorList>
    </citation>
    <scope>PROTEIN SEQUENCE OF 35-40; 36-45; 41-45; 46-57; 62-71; 76-94; 99-107; 100-119; 108-119 AND 120-131</scope>
    <scope>SUBUNIT</scope>
    <scope>TISSUE SPECIFICITY</scope>
    <scope>MASS SPECTROMETRY</scope>
    <scope>IDENTIFICATION BY MASS SPECTROMETRY</scope>
    <scope>ALLERGEN</scope>
    <source>
        <strain evidence="16">cv. Chandler</strain>
        <tissue evidence="16">Seed</tissue>
    </source>
</reference>
<reference key="4">
    <citation type="journal article" date="2002" name="J. Allergy Clin. Immunol.">
        <title>Linear IgE epitope mapping of the English walnut (Juglans regia) major food allergen, Jug r 1.</title>
        <authorList>
            <person name="Robotham J.M."/>
            <person name="Teuber S.S."/>
            <person name="Sathe S.K."/>
            <person name="Roux K.H."/>
        </authorList>
    </citation>
    <scope>ALLERGEN</scope>
    <scope>REGIONS</scope>
    <scope>SITE</scope>
    <scope>MUTAGENESIS OF GLN-104; GLY-105; LEU-106; ARG-107; GLY-108; GLU-109; GLU-110; MET-111; GLU-112; GLU-113; MET-114 AND VAL-115</scope>
</reference>
<reference key="5">
    <citation type="journal article" date="2009" name="Peptides">
        <title>Expression of Jug r 1, the 2S albumin allergen from walnut (Juglans regia), as a correctly folded and functional recombinant protein.</title>
        <authorList>
            <person name="Sordet C."/>
            <person name="Culerrier R."/>
            <person name="Granier C."/>
            <person name="Rance F."/>
            <person name="Didier A."/>
            <person name="Barre A."/>
            <person name="Rouge P."/>
        </authorList>
    </citation>
    <scope>BIOPHYSICOCHEMICAL PROPERTIES</scope>
    <scope>SUBUNIT</scope>
    <scope>TISSUE SPECIFICITY</scope>
    <scope>DEVELOPMENTAL STAGE</scope>
    <scope>IDENTIFICATION BY MASS SPECTROMETRY</scope>
    <scope>MASS SPECTROMETRY</scope>
    <scope>ALLERGEN</scope>
    <scope>BIOTECHNOLOGY</scope>
    <scope>REGIONS</scope>
    <scope>3D-STRUCTURE MODELING</scope>
    <scope>CIRCULAR DICHROISM ANALYSIS</scope>
</reference>
<reference key="6">
    <citation type="journal article" date="2012" name="Int. Arch. Allergy Immunol.">
        <title>Walnut allergy in peanut-allergic patients: significance of sequential epitopes of walnut homologous to linear epitopes of Ara h 1, 2 and 3 in relation to clinical reactivity.</title>
        <authorList>
            <person name="Rosenfeld L."/>
            <person name="Shreffler W."/>
            <person name="Bardina L."/>
            <person name="Niggemann B."/>
            <person name="Wahn U."/>
            <person name="Sampson H.A."/>
            <person name="Beyer K."/>
        </authorList>
    </citation>
    <scope>ALLERGEN</scope>
    <scope>REGIONS</scope>
</reference>
<reference key="7">
    <citation type="journal article" date="2014" name="Food Chem.">
        <title>Development of an indirect competitive immunoassay for walnut protein component in food.</title>
        <authorList>
            <person name="Wang H."/>
            <person name="Li G."/>
            <person name="Wu Y."/>
            <person name="Yuan F."/>
            <person name="Chen Y."/>
        </authorList>
    </citation>
    <scope>BIOTECHNOLOGY</scope>
</reference>
<reference key="8">
    <citation type="journal article" date="2017" name="J. Allergy Clin. Immunol.">
        <title>Specific IgE to Jug r 1 has no additional value compared with extract-based testing in diagnosing walnut allergy in adults.</title>
        <authorList>
            <person name="Blankestijn M.A."/>
            <person name="Blom W.M."/>
            <person name="Otten H.G."/>
            <person name="Baumert J.L."/>
            <person name="Taylor S.L."/>
            <person name="Bruijnzeel-Koomen C.A."/>
            <person name="Houben G.F."/>
            <person name="Knulst A.C."/>
            <person name="Klemans R.J."/>
        </authorList>
    </citation>
    <scope>ALLERGEN</scope>
</reference>
<reference key="9">
    <citation type="journal article" date="2017" name="J. Allergy Clin. Immunol. Pract.">
        <title>Jug r 1 sensitization is important in walnut-allergic children and youth.</title>
        <authorList>
            <person name="Sato S."/>
            <person name="Yamamoto M."/>
            <person name="Yanagida N."/>
            <person name="Ito K."/>
            <person name="Ohya Y."/>
            <person name="Imai T."/>
            <person name="Nagao M."/>
            <person name="Borres M.P."/>
            <person name="Moverare R."/>
            <person name="Ebisawa M."/>
        </authorList>
    </citation>
    <scope>ALLERGEN</scope>
    <scope>BIOTECHNOLOGY</scope>
</reference>
<reference key="10">
    <citation type="journal article" date="2021" name="Asian Pac. J. Allergy Immunol.">
        <title>Component resolved diagnosis of walnut allergy in young children: Jug r 1 as a major walnut allergen.</title>
        <authorList>
            <person name="Lee J."/>
            <person name="Jeong K."/>
            <person name="Jeon S.A."/>
            <person name="Lee S."/>
        </authorList>
    </citation>
    <scope>ALLERGEN</scope>
    <scope>BIOTECHNOLOGY</scope>
</reference>
<name>2SS_JUGRE</name>
<dbReference type="EMBL" id="U66866">
    <property type="protein sequence ID" value="AAB41308.1"/>
    <property type="molecule type" value="mRNA"/>
</dbReference>
<dbReference type="SMR" id="P93198"/>
<dbReference type="FunCoup" id="P93198">
    <property type="interactions" value="229"/>
</dbReference>
<dbReference type="Allergome" id="3334">
    <property type="allergen name" value="Jug r 1.0101"/>
</dbReference>
<dbReference type="Allergome" id="424">
    <property type="allergen name" value="Jug r 1"/>
</dbReference>
<dbReference type="InParanoid" id="P93198"/>
<dbReference type="Proteomes" id="UP000235220">
    <property type="component" value="Unplaced"/>
</dbReference>
<dbReference type="GO" id="GO:0043245">
    <property type="term" value="C:extraorganismal space"/>
    <property type="evidence" value="ECO:0000314"/>
    <property type="project" value="UniProtKB"/>
</dbReference>
<dbReference type="GO" id="GO:0045735">
    <property type="term" value="F:nutrient reservoir activity"/>
    <property type="evidence" value="ECO:0000305"/>
    <property type="project" value="UniProtKB"/>
</dbReference>
<dbReference type="GO" id="GO:0010431">
    <property type="term" value="P:seed maturation"/>
    <property type="evidence" value="ECO:0000270"/>
    <property type="project" value="UniProtKB"/>
</dbReference>
<dbReference type="CDD" id="cd00261">
    <property type="entry name" value="AAI_SS"/>
    <property type="match status" value="1"/>
</dbReference>
<dbReference type="Gene3D" id="1.10.110.10">
    <property type="entry name" value="Plant lipid-transfer and hydrophobic proteins"/>
    <property type="match status" value="1"/>
</dbReference>
<dbReference type="InterPro" id="IPR036312">
    <property type="entry name" value="Bifun_inhib/LTP/seed_sf"/>
</dbReference>
<dbReference type="InterPro" id="IPR016140">
    <property type="entry name" value="Bifunc_inhib/LTP/seed_store"/>
</dbReference>
<dbReference type="InterPro" id="IPR000617">
    <property type="entry name" value="Napin/2SS/CON"/>
</dbReference>
<dbReference type="PANTHER" id="PTHR35496">
    <property type="entry name" value="2S SEED STORAGE PROTEIN 1-RELATED"/>
    <property type="match status" value="1"/>
</dbReference>
<dbReference type="PANTHER" id="PTHR35496:SF20">
    <property type="entry name" value="2S SEED STORAGE PROTEIN 1-RELATED"/>
    <property type="match status" value="1"/>
</dbReference>
<dbReference type="Pfam" id="PF00234">
    <property type="entry name" value="Tryp_alpha_amyl"/>
    <property type="match status" value="1"/>
</dbReference>
<dbReference type="PRINTS" id="PR00496">
    <property type="entry name" value="NAPIN"/>
</dbReference>
<dbReference type="SMART" id="SM00499">
    <property type="entry name" value="AAI"/>
    <property type="match status" value="1"/>
</dbReference>
<dbReference type="SUPFAM" id="SSF47699">
    <property type="entry name" value="Bifunctional inhibitor/lipid-transfer protein/seed storage 2S albumin"/>
    <property type="match status" value="1"/>
</dbReference>
<protein>
    <recommendedName>
        <fullName>2S seed storage albumin protein</fullName>
    </recommendedName>
    <alternativeName>
        <fullName evidence="13 14 15 16">2S albumin</fullName>
    </alternativeName>
    <alternativeName>
        <fullName evidence="13 21">2S albumin seed storage protein</fullName>
    </alternativeName>
    <alternativeName>
        <fullName evidence="13 14 17 18 19 20 21">Allergen Jug r 1</fullName>
    </alternativeName>
    <allergenName evidence="22">Jug r 1.0101</allergenName>
    <component>
        <recommendedName>
            <fullName evidence="13 21">2S albumin seed storage protein small subunit</fullName>
        </recommendedName>
    </component>
    <component>
        <recommendedName>
            <fullName evidence="13 21">2S albumin seed storage protein large subunit</fullName>
        </recommendedName>
    </component>
</protein>